<keyword id="KW-0687">Ribonucleoprotein</keyword>
<keyword id="KW-0689">Ribosomal protein</keyword>
<proteinExistence type="inferred from homology"/>
<sequence length="127" mass="14395">MRHRKSGRQLNRNSSHRQAMFRNMAGSLVRHEIIKTTLPKAKELRRVVEPLITLAKTDSVANRRLAFARTRDNEIVAKLFNELGPRFASRAGGYTRILKCGFRAGDNAPMAYIELVDRSEKTEAAAE</sequence>
<accession>B5BGW0</accession>
<feature type="chain" id="PRO_1000144481" description="Large ribosomal subunit protein bL17">
    <location>
        <begin position="1"/>
        <end position="127"/>
    </location>
</feature>
<name>RL17_SALPK</name>
<evidence type="ECO:0000255" key="1">
    <source>
        <dbReference type="HAMAP-Rule" id="MF_01368"/>
    </source>
</evidence>
<evidence type="ECO:0000305" key="2"/>
<organism>
    <name type="scientific">Salmonella paratyphi A (strain AKU_12601)</name>
    <dbReference type="NCBI Taxonomy" id="554290"/>
    <lineage>
        <taxon>Bacteria</taxon>
        <taxon>Pseudomonadati</taxon>
        <taxon>Pseudomonadota</taxon>
        <taxon>Gammaproteobacteria</taxon>
        <taxon>Enterobacterales</taxon>
        <taxon>Enterobacteriaceae</taxon>
        <taxon>Salmonella</taxon>
    </lineage>
</organism>
<dbReference type="EMBL" id="FM200053">
    <property type="protein sequence ID" value="CAR61310.1"/>
    <property type="molecule type" value="Genomic_DNA"/>
</dbReference>
<dbReference type="RefSeq" id="WP_001216370.1">
    <property type="nucleotide sequence ID" value="NC_011147.1"/>
</dbReference>
<dbReference type="SMR" id="B5BGW0"/>
<dbReference type="GeneID" id="89546962"/>
<dbReference type="KEGG" id="sek:SSPA3059"/>
<dbReference type="HOGENOM" id="CLU_074407_2_0_6"/>
<dbReference type="Proteomes" id="UP000001869">
    <property type="component" value="Chromosome"/>
</dbReference>
<dbReference type="GO" id="GO:0022625">
    <property type="term" value="C:cytosolic large ribosomal subunit"/>
    <property type="evidence" value="ECO:0007669"/>
    <property type="project" value="TreeGrafter"/>
</dbReference>
<dbReference type="GO" id="GO:0003735">
    <property type="term" value="F:structural constituent of ribosome"/>
    <property type="evidence" value="ECO:0007669"/>
    <property type="project" value="InterPro"/>
</dbReference>
<dbReference type="GO" id="GO:0006412">
    <property type="term" value="P:translation"/>
    <property type="evidence" value="ECO:0007669"/>
    <property type="project" value="UniProtKB-UniRule"/>
</dbReference>
<dbReference type="FunFam" id="3.90.1030.10:FF:000001">
    <property type="entry name" value="50S ribosomal protein L17"/>
    <property type="match status" value="1"/>
</dbReference>
<dbReference type="Gene3D" id="3.90.1030.10">
    <property type="entry name" value="Ribosomal protein L17"/>
    <property type="match status" value="1"/>
</dbReference>
<dbReference type="HAMAP" id="MF_01368">
    <property type="entry name" value="Ribosomal_bL17"/>
    <property type="match status" value="1"/>
</dbReference>
<dbReference type="InterPro" id="IPR000456">
    <property type="entry name" value="Ribosomal_bL17"/>
</dbReference>
<dbReference type="InterPro" id="IPR047859">
    <property type="entry name" value="Ribosomal_bL17_CS"/>
</dbReference>
<dbReference type="InterPro" id="IPR036373">
    <property type="entry name" value="Ribosomal_bL17_sf"/>
</dbReference>
<dbReference type="NCBIfam" id="TIGR00059">
    <property type="entry name" value="L17"/>
    <property type="match status" value="1"/>
</dbReference>
<dbReference type="PANTHER" id="PTHR14413:SF16">
    <property type="entry name" value="LARGE RIBOSOMAL SUBUNIT PROTEIN BL17M"/>
    <property type="match status" value="1"/>
</dbReference>
<dbReference type="PANTHER" id="PTHR14413">
    <property type="entry name" value="RIBOSOMAL PROTEIN L17"/>
    <property type="match status" value="1"/>
</dbReference>
<dbReference type="Pfam" id="PF01196">
    <property type="entry name" value="Ribosomal_L17"/>
    <property type="match status" value="1"/>
</dbReference>
<dbReference type="SUPFAM" id="SSF64263">
    <property type="entry name" value="Prokaryotic ribosomal protein L17"/>
    <property type="match status" value="1"/>
</dbReference>
<dbReference type="PROSITE" id="PS01167">
    <property type="entry name" value="RIBOSOMAL_L17"/>
    <property type="match status" value="1"/>
</dbReference>
<protein>
    <recommendedName>
        <fullName evidence="1">Large ribosomal subunit protein bL17</fullName>
    </recommendedName>
    <alternativeName>
        <fullName evidence="2">50S ribosomal protein L17</fullName>
    </alternativeName>
</protein>
<comment type="subunit">
    <text evidence="1">Part of the 50S ribosomal subunit. Contacts protein L32.</text>
</comment>
<comment type="similarity">
    <text evidence="1">Belongs to the bacterial ribosomal protein bL17 family.</text>
</comment>
<reference key="1">
    <citation type="journal article" date="2009" name="BMC Genomics">
        <title>Pseudogene accumulation in the evolutionary histories of Salmonella enterica serovars Paratyphi A and Typhi.</title>
        <authorList>
            <person name="Holt K.E."/>
            <person name="Thomson N.R."/>
            <person name="Wain J."/>
            <person name="Langridge G.C."/>
            <person name="Hasan R."/>
            <person name="Bhutta Z.A."/>
            <person name="Quail M.A."/>
            <person name="Norbertczak H."/>
            <person name="Walker D."/>
            <person name="Simmonds M."/>
            <person name="White B."/>
            <person name="Bason N."/>
            <person name="Mungall K."/>
            <person name="Dougan G."/>
            <person name="Parkhill J."/>
        </authorList>
    </citation>
    <scope>NUCLEOTIDE SEQUENCE [LARGE SCALE GENOMIC DNA]</scope>
    <source>
        <strain>AKU_12601</strain>
    </source>
</reference>
<gene>
    <name evidence="1" type="primary">rplQ</name>
    <name type="ordered locus">SSPA3059</name>
</gene>